<dbReference type="EC" id="2.3.1.189" evidence="1"/>
<dbReference type="EMBL" id="CP001341">
    <property type="protein sequence ID" value="ACL40690.1"/>
    <property type="molecule type" value="Genomic_DNA"/>
</dbReference>
<dbReference type="RefSeq" id="WP_015937886.1">
    <property type="nucleotide sequence ID" value="NC_011886.1"/>
</dbReference>
<dbReference type="SMR" id="B8HD44"/>
<dbReference type="STRING" id="452863.Achl_2725"/>
<dbReference type="KEGG" id="ach:Achl_2725"/>
<dbReference type="eggNOG" id="COG0456">
    <property type="taxonomic scope" value="Bacteria"/>
</dbReference>
<dbReference type="HOGENOM" id="CLU_068014_0_0_11"/>
<dbReference type="OrthoDB" id="3208058at2"/>
<dbReference type="Proteomes" id="UP000002505">
    <property type="component" value="Chromosome"/>
</dbReference>
<dbReference type="GO" id="GO:0035447">
    <property type="term" value="F:mycothiol synthase activity"/>
    <property type="evidence" value="ECO:0007669"/>
    <property type="project" value="UniProtKB-UniRule"/>
</dbReference>
<dbReference type="GO" id="GO:0008999">
    <property type="term" value="F:protein-N-terminal-alanine acetyltransferase activity"/>
    <property type="evidence" value="ECO:0007669"/>
    <property type="project" value="TreeGrafter"/>
</dbReference>
<dbReference type="GO" id="GO:0010125">
    <property type="term" value="P:mycothiol biosynthetic process"/>
    <property type="evidence" value="ECO:0007669"/>
    <property type="project" value="UniProtKB-UniRule"/>
</dbReference>
<dbReference type="CDD" id="cd04301">
    <property type="entry name" value="NAT_SF"/>
    <property type="match status" value="2"/>
</dbReference>
<dbReference type="Gene3D" id="3.40.630.30">
    <property type="match status" value="1"/>
</dbReference>
<dbReference type="HAMAP" id="MF_01698">
    <property type="entry name" value="MshD"/>
    <property type="match status" value="1"/>
</dbReference>
<dbReference type="InterPro" id="IPR016181">
    <property type="entry name" value="Acyl_CoA_acyltransferase"/>
</dbReference>
<dbReference type="InterPro" id="IPR000182">
    <property type="entry name" value="GNAT_dom"/>
</dbReference>
<dbReference type="InterPro" id="IPR050276">
    <property type="entry name" value="MshD_Acetyltransferase"/>
</dbReference>
<dbReference type="InterPro" id="IPR017813">
    <property type="entry name" value="Mycothiol_AcTrfase"/>
</dbReference>
<dbReference type="NCBIfam" id="TIGR03448">
    <property type="entry name" value="mycothiol_MshD"/>
    <property type="match status" value="1"/>
</dbReference>
<dbReference type="PANTHER" id="PTHR43617">
    <property type="entry name" value="L-AMINO ACID N-ACETYLTRANSFERASE"/>
    <property type="match status" value="1"/>
</dbReference>
<dbReference type="PANTHER" id="PTHR43617:SF31">
    <property type="entry name" value="MYCOTHIOL ACETYLTRANSFERASE"/>
    <property type="match status" value="1"/>
</dbReference>
<dbReference type="Pfam" id="PF00583">
    <property type="entry name" value="Acetyltransf_1"/>
    <property type="match status" value="1"/>
</dbReference>
<dbReference type="Pfam" id="PF13508">
    <property type="entry name" value="Acetyltransf_7"/>
    <property type="match status" value="1"/>
</dbReference>
<dbReference type="PIRSF" id="PIRSF021524">
    <property type="entry name" value="MSH_acetyltransferase"/>
    <property type="match status" value="1"/>
</dbReference>
<dbReference type="SUPFAM" id="SSF55729">
    <property type="entry name" value="Acyl-CoA N-acyltransferases (Nat)"/>
    <property type="match status" value="1"/>
</dbReference>
<dbReference type="PROSITE" id="PS51186">
    <property type="entry name" value="GNAT"/>
    <property type="match status" value="2"/>
</dbReference>
<gene>
    <name evidence="1" type="primary">mshD</name>
    <name type="ordered locus">Achl_2725</name>
</gene>
<comment type="function">
    <text evidence="1">Catalyzes the transfer of acetyl from acetyl-CoA to desacetylmycothiol (Cys-GlcN-Ins) to form mycothiol.</text>
</comment>
<comment type="catalytic activity">
    <reaction evidence="1">
        <text>1D-myo-inositol 2-(L-cysteinylamino)-2-deoxy-alpha-D-glucopyranoside + acetyl-CoA = mycothiol + CoA + H(+)</text>
        <dbReference type="Rhea" id="RHEA:26172"/>
        <dbReference type="ChEBI" id="CHEBI:15378"/>
        <dbReference type="ChEBI" id="CHEBI:16768"/>
        <dbReference type="ChEBI" id="CHEBI:57287"/>
        <dbReference type="ChEBI" id="CHEBI:57288"/>
        <dbReference type="ChEBI" id="CHEBI:58887"/>
        <dbReference type="EC" id="2.3.1.189"/>
    </reaction>
</comment>
<comment type="subunit">
    <text evidence="1">Monomer.</text>
</comment>
<comment type="similarity">
    <text evidence="1">Belongs to the acetyltransferase family. MshD subfamily.</text>
</comment>
<organism>
    <name type="scientific">Pseudarthrobacter chlorophenolicus (strain ATCC 700700 / DSM 12829 / CIP 107037 / JCM 12360 / KCTC 9906 / NCIMB 13794 / A6)</name>
    <name type="common">Arthrobacter chlorophenolicus</name>
    <dbReference type="NCBI Taxonomy" id="452863"/>
    <lineage>
        <taxon>Bacteria</taxon>
        <taxon>Bacillati</taxon>
        <taxon>Actinomycetota</taxon>
        <taxon>Actinomycetes</taxon>
        <taxon>Micrococcales</taxon>
        <taxon>Micrococcaceae</taxon>
        <taxon>Pseudarthrobacter</taxon>
    </lineage>
</organism>
<evidence type="ECO:0000255" key="1">
    <source>
        <dbReference type="HAMAP-Rule" id="MF_01698"/>
    </source>
</evidence>
<sequence length="323" mass="34972">MTPAHPEKWPVHVVQGGVDRQLLKDCRDLLAAAEESDGNPSISEQTLVTMRAGDSADHSLLTLALYAPDEDSDPATGQDLAGFAVVVEEPDRSGVLEIAVHPSYRNQGVADRLVRALQDRRGFDGLKAWSHGNHEAAADLAARYGYAPVRELWKMRMTTAEADLPEAALPEGVSLRPFVPGQDEDAWLAVNSAAFAHHPEQGSLTRADLAARMEEDWFDPAGFLLAVDAGGRVLGFHWTKVHPRHGSHPAIGEVYVVGVAPEAQGSGLGKALTLAGIKYLQDLGLHAVMLYTDADNTPAVSLYRRLGFTRWDMDVMYGPVKEG</sequence>
<reference key="1">
    <citation type="submission" date="2009-01" db="EMBL/GenBank/DDBJ databases">
        <title>Complete sequence of chromosome of Arthrobacter chlorophenolicus A6.</title>
        <authorList>
            <consortium name="US DOE Joint Genome Institute"/>
            <person name="Lucas S."/>
            <person name="Copeland A."/>
            <person name="Lapidus A."/>
            <person name="Glavina del Rio T."/>
            <person name="Tice H."/>
            <person name="Bruce D."/>
            <person name="Goodwin L."/>
            <person name="Pitluck S."/>
            <person name="Goltsman E."/>
            <person name="Clum A."/>
            <person name="Larimer F."/>
            <person name="Land M."/>
            <person name="Hauser L."/>
            <person name="Kyrpides N."/>
            <person name="Mikhailova N."/>
            <person name="Jansson J."/>
            <person name="Richardson P."/>
        </authorList>
    </citation>
    <scope>NUCLEOTIDE SEQUENCE [LARGE SCALE GENOMIC DNA]</scope>
    <source>
        <strain>ATCC 700700 / DSM 12829 / CIP 107037 / JCM 12360 / KCTC 9906 / NCIMB 13794 / A6</strain>
    </source>
</reference>
<keyword id="KW-0012">Acyltransferase</keyword>
<keyword id="KW-0677">Repeat</keyword>
<keyword id="KW-0808">Transferase</keyword>
<proteinExistence type="inferred from homology"/>
<name>MSHD_PSECP</name>
<protein>
    <recommendedName>
        <fullName evidence="1">Mycothiol acetyltransferase</fullName>
        <shortName evidence="1">MSH acetyltransferase</shortName>
        <ecNumber evidence="1">2.3.1.189</ecNumber>
    </recommendedName>
    <alternativeName>
        <fullName evidence="1">Mycothiol synthase</fullName>
    </alternativeName>
</protein>
<feature type="chain" id="PRO_0000400239" description="Mycothiol acetyltransferase">
    <location>
        <begin position="1"/>
        <end position="323"/>
    </location>
</feature>
<feature type="domain" description="N-acetyltransferase 1" evidence="1">
    <location>
        <begin position="77"/>
        <end position="176"/>
    </location>
</feature>
<feature type="domain" description="N-acetyltransferase 2" evidence="1">
    <location>
        <begin position="173"/>
        <end position="323"/>
    </location>
</feature>
<feature type="binding site" evidence="1">
    <location>
        <position position="44"/>
    </location>
    <ligand>
        <name>1D-myo-inositol 2-(L-cysteinylamino)-2-deoxy-alpha-D-glucopyranoside</name>
        <dbReference type="ChEBI" id="CHEBI:58887"/>
    </ligand>
</feature>
<feature type="binding site" evidence="1">
    <location>
        <begin position="98"/>
        <end position="100"/>
    </location>
    <ligand>
        <name>acetyl-CoA</name>
        <dbReference type="ChEBI" id="CHEBI:57288"/>
        <label>1</label>
    </ligand>
</feature>
<feature type="binding site" evidence="1">
    <location>
        <position position="200"/>
    </location>
    <ligand>
        <name>1D-myo-inositol 2-(L-cysteinylamino)-2-deoxy-alpha-D-glucopyranoside</name>
        <dbReference type="ChEBI" id="CHEBI:58887"/>
    </ligand>
</feature>
<feature type="binding site" evidence="1">
    <location>
        <position position="240"/>
    </location>
    <ligand>
        <name>1D-myo-inositol 2-(L-cysteinylamino)-2-deoxy-alpha-D-glucopyranoside</name>
        <dbReference type="ChEBI" id="CHEBI:58887"/>
    </ligand>
</feature>
<feature type="binding site" evidence="1">
    <location>
        <position position="253"/>
    </location>
    <ligand>
        <name>1D-myo-inositol 2-(L-cysteinylamino)-2-deoxy-alpha-D-glucopyranoside</name>
        <dbReference type="ChEBI" id="CHEBI:58887"/>
    </ligand>
</feature>
<feature type="binding site" evidence="1">
    <location>
        <begin position="257"/>
        <end position="259"/>
    </location>
    <ligand>
        <name>acetyl-CoA</name>
        <dbReference type="ChEBI" id="CHEBI:57288"/>
        <label>2</label>
    </ligand>
</feature>
<feature type="binding site" evidence="1">
    <location>
        <begin position="264"/>
        <end position="270"/>
    </location>
    <ligand>
        <name>acetyl-CoA</name>
        <dbReference type="ChEBI" id="CHEBI:57288"/>
        <label>2</label>
    </ligand>
</feature>
<feature type="binding site" evidence="1">
    <location>
        <position position="291"/>
    </location>
    <ligand>
        <name>1D-myo-inositol 2-(L-cysteinylamino)-2-deoxy-alpha-D-glucopyranoside</name>
        <dbReference type="ChEBI" id="CHEBI:58887"/>
    </ligand>
</feature>
<accession>B8HD44</accession>